<gene>
    <name type="primary">SCPL13</name>
    <name type="ordered locus">At2g22980</name>
    <name type="ORF">F21P24.4</name>
    <name type="ORF">T20K9.20</name>
</gene>
<keyword id="KW-0012">Acyltransferase</keyword>
<keyword id="KW-0025">Alternative splicing</keyword>
<keyword id="KW-1015">Disulfide bond</keyword>
<keyword id="KW-0325">Glycoprotein</keyword>
<keyword id="KW-1185">Reference proteome</keyword>
<keyword id="KW-0964">Secreted</keyword>
<keyword id="KW-0732">Signal</keyword>
<keyword id="KW-0808">Transferase</keyword>
<organism>
    <name type="scientific">Arabidopsis thaliana</name>
    <name type="common">Mouse-ear cress</name>
    <dbReference type="NCBI Taxonomy" id="3702"/>
    <lineage>
        <taxon>Eukaryota</taxon>
        <taxon>Viridiplantae</taxon>
        <taxon>Streptophyta</taxon>
        <taxon>Embryophyta</taxon>
        <taxon>Tracheophyta</taxon>
        <taxon>Spermatophyta</taxon>
        <taxon>Magnoliopsida</taxon>
        <taxon>eudicotyledons</taxon>
        <taxon>Gunneridae</taxon>
        <taxon>Pentapetalae</taxon>
        <taxon>rosids</taxon>
        <taxon>malvids</taxon>
        <taxon>Brassicales</taxon>
        <taxon>Brassicaceae</taxon>
        <taxon>Camelineae</taxon>
        <taxon>Arabidopsis</taxon>
    </lineage>
</organism>
<accession>Q8H780</accession>
<accession>O64808</accession>
<accession>Q94EH0</accession>
<name>SCP13_ARATH</name>
<comment type="function">
    <text evidence="4">Catalyzes the formation of 1,2-bis-O-sinapoyl beta-D-glucoside.</text>
</comment>
<comment type="catalytic activity">
    <reaction>
        <text>2 1-O-(trans-sinapoyl)-beta-D-glucose = 1,2-di-O-sinapoyl beta-D-glucose + D-glucose</text>
        <dbReference type="Rhea" id="RHEA:22664"/>
        <dbReference type="ChEBI" id="CHEBI:4167"/>
        <dbReference type="ChEBI" id="CHEBI:16546"/>
        <dbReference type="ChEBI" id="CHEBI:27993"/>
        <dbReference type="EC" id="2.3.1.103"/>
    </reaction>
</comment>
<comment type="subcellular location">
    <subcellularLocation>
        <location evidence="6">Secreted</location>
    </subcellularLocation>
</comment>
<comment type="alternative products">
    <event type="alternative splicing"/>
    <isoform>
        <id>Q8H780-1</id>
        <name>1</name>
        <sequence type="displayed"/>
    </isoform>
    <isoform>
        <id>Q8H780-2</id>
        <name>2</name>
        <sequence type="described" ref="VSP_022847 VSP_022848"/>
    </isoform>
</comment>
<comment type="tissue specificity">
    <text evidence="3">Expression not detected.</text>
</comment>
<comment type="similarity">
    <text evidence="6">Belongs to the peptidase S10 family.</text>
</comment>
<comment type="caution">
    <text evidence="7 8">Was classified as a serine carboxypeptidase-like (SCPL) protein solely on the basis of the overall sequence similarity (PubMed:15908604) but it has been shown that it belongs to a class of enzymes that catalyze acyltransferase reactions (PubMed:17600138).</text>
</comment>
<comment type="sequence caution" evidence="6">
    <conflict type="frameshift">
        <sequence resource="EMBL-CDS" id="AAK95312"/>
    </conflict>
</comment>
<comment type="sequence caution" evidence="6">
    <conflict type="erroneous initiation">
        <sequence resource="EMBL-CDS" id="AAN18098"/>
    </conflict>
</comment>
<reference key="1">
    <citation type="submission" date="1998-08" db="EMBL/GenBank/DDBJ databases">
        <title>Signal peptide selection derived cDNAs from Arabidopsis thaliana leaves and guard cells.</title>
        <authorList>
            <person name="Stracke R."/>
            <person name="Palme K."/>
        </authorList>
    </citation>
    <scope>NUCLEOTIDE SEQUENCE [LARGE SCALE MRNA] (ISOFORM 2)</scope>
</reference>
<reference key="2">
    <citation type="journal article" date="1999" name="Nature">
        <title>Sequence and analysis of chromosome 2 of the plant Arabidopsis thaliana.</title>
        <authorList>
            <person name="Lin X."/>
            <person name="Kaul S."/>
            <person name="Rounsley S.D."/>
            <person name="Shea T.P."/>
            <person name="Benito M.-I."/>
            <person name="Town C.D."/>
            <person name="Fujii C.Y."/>
            <person name="Mason T.M."/>
            <person name="Bowman C.L."/>
            <person name="Barnstead M.E."/>
            <person name="Feldblyum T.V."/>
            <person name="Buell C.R."/>
            <person name="Ketchum K.A."/>
            <person name="Lee J.J."/>
            <person name="Ronning C.M."/>
            <person name="Koo H.L."/>
            <person name="Moffat K.S."/>
            <person name="Cronin L.A."/>
            <person name="Shen M."/>
            <person name="Pai G."/>
            <person name="Van Aken S."/>
            <person name="Umayam L."/>
            <person name="Tallon L.J."/>
            <person name="Gill J.E."/>
            <person name="Adams M.D."/>
            <person name="Carrera A.J."/>
            <person name="Creasy T.H."/>
            <person name="Goodman H.M."/>
            <person name="Somerville C.R."/>
            <person name="Copenhaver G.P."/>
            <person name="Preuss D."/>
            <person name="Nierman W.C."/>
            <person name="White O."/>
            <person name="Eisen J.A."/>
            <person name="Salzberg S.L."/>
            <person name="Fraser C.M."/>
            <person name="Venter J.C."/>
        </authorList>
    </citation>
    <scope>NUCLEOTIDE SEQUENCE [LARGE SCALE GENOMIC DNA]</scope>
    <source>
        <strain>cv. Columbia</strain>
    </source>
</reference>
<reference key="3">
    <citation type="journal article" date="2017" name="Plant J.">
        <title>Araport11: a complete reannotation of the Arabidopsis thaliana reference genome.</title>
        <authorList>
            <person name="Cheng C.Y."/>
            <person name="Krishnakumar V."/>
            <person name="Chan A.P."/>
            <person name="Thibaud-Nissen F."/>
            <person name="Schobel S."/>
            <person name="Town C.D."/>
        </authorList>
    </citation>
    <scope>GENOME REANNOTATION</scope>
    <source>
        <strain>cv. Columbia</strain>
    </source>
</reference>
<reference key="4">
    <citation type="journal article" date="2003" name="Science">
        <title>Empirical analysis of transcriptional activity in the Arabidopsis genome.</title>
        <authorList>
            <person name="Yamada K."/>
            <person name="Lim J."/>
            <person name="Dale J.M."/>
            <person name="Chen H."/>
            <person name="Shinn P."/>
            <person name="Palm C.J."/>
            <person name="Southwick A.M."/>
            <person name="Wu H.C."/>
            <person name="Kim C.J."/>
            <person name="Nguyen M."/>
            <person name="Pham P.K."/>
            <person name="Cheuk R.F."/>
            <person name="Karlin-Newmann G."/>
            <person name="Liu S.X."/>
            <person name="Lam B."/>
            <person name="Sakano H."/>
            <person name="Wu T."/>
            <person name="Yu G."/>
            <person name="Miranda M."/>
            <person name="Quach H.L."/>
            <person name="Tripp M."/>
            <person name="Chang C.H."/>
            <person name="Lee J.M."/>
            <person name="Toriumi M.J."/>
            <person name="Chan M.M."/>
            <person name="Tang C.C."/>
            <person name="Onodera C.S."/>
            <person name="Deng J.M."/>
            <person name="Akiyama K."/>
            <person name="Ansari Y."/>
            <person name="Arakawa T."/>
            <person name="Banh J."/>
            <person name="Banno F."/>
            <person name="Bowser L."/>
            <person name="Brooks S.Y."/>
            <person name="Carninci P."/>
            <person name="Chao Q."/>
            <person name="Choy N."/>
            <person name="Enju A."/>
            <person name="Goldsmith A.D."/>
            <person name="Gurjal M."/>
            <person name="Hansen N.F."/>
            <person name="Hayashizaki Y."/>
            <person name="Johnson-Hopson C."/>
            <person name="Hsuan V.W."/>
            <person name="Iida K."/>
            <person name="Karnes M."/>
            <person name="Khan S."/>
            <person name="Koesema E."/>
            <person name="Ishida J."/>
            <person name="Jiang P.X."/>
            <person name="Jones T."/>
            <person name="Kawai J."/>
            <person name="Kamiya A."/>
            <person name="Meyers C."/>
            <person name="Nakajima M."/>
            <person name="Narusaka M."/>
            <person name="Seki M."/>
            <person name="Sakurai T."/>
            <person name="Satou M."/>
            <person name="Tamse R."/>
            <person name="Vaysberg M."/>
            <person name="Wallender E.K."/>
            <person name="Wong C."/>
            <person name="Yamamura Y."/>
            <person name="Yuan S."/>
            <person name="Shinozaki K."/>
            <person name="Davis R.W."/>
            <person name="Theologis A."/>
            <person name="Ecker J.R."/>
        </authorList>
    </citation>
    <scope>NUCLEOTIDE SEQUENCE [LARGE SCALE MRNA] OF 78-430 (ISOFORM 1)</scope>
    <source>
        <strain>cv. Columbia</strain>
    </source>
</reference>
<reference key="5">
    <citation type="journal article" date="2005" name="Plant Physiol.">
        <title>An expression and bioinformatics analysis of the Arabidopsis serine carboxypeptidase-like gene family.</title>
        <authorList>
            <person name="Fraser C.M."/>
            <person name="Rider L.W."/>
            <person name="Chapple C."/>
        </authorList>
    </citation>
    <scope>GENE FAMILY</scope>
    <scope>TISSUE SPECIFICITY</scope>
    <scope>NOMENCLATURE</scope>
</reference>
<reference key="6">
    <citation type="journal article" date="2007" name="Plant Physiol.">
        <title>Related Arabidopsis serine carboxypeptidase-like sinapoylglucose acyltransferases display distinct but overlapping substrate specificities.</title>
        <authorList>
            <person name="Fraser C.M."/>
            <person name="Thompson M.G."/>
            <person name="Shirley A.M."/>
            <person name="Ralph J."/>
            <person name="Schoenherr J.A."/>
            <person name="Sinlapadech T."/>
            <person name="Hall M.C."/>
            <person name="Chapple C."/>
        </authorList>
    </citation>
    <scope>FUNCTION</scope>
</reference>
<evidence type="ECO:0000250" key="1"/>
<evidence type="ECO:0000255" key="2"/>
<evidence type="ECO:0000269" key="3">
    <source>
    </source>
</evidence>
<evidence type="ECO:0000269" key="4">
    <source>
    </source>
</evidence>
<evidence type="ECO:0000303" key="5">
    <source ref="1"/>
</evidence>
<evidence type="ECO:0000305" key="6"/>
<evidence type="ECO:0000305" key="7">
    <source>
    </source>
</evidence>
<evidence type="ECO:0000305" key="8">
    <source>
    </source>
</evidence>
<sequence length="430" mass="49150">MSLTLEFLLLLIVLILSHHAHSGSIVKFLPGFEGPLPFELETGYIGIGEEEEVQLFYYFIKSEKNPEEDPLLLWLSGGPGCSSLTGLLFENGPVALKFEVYNGSVPSLVSTTYSWTKMANIIFLDQPVGSGFSYSRTPLVDKISDTGEVKRIYEFLQKWLSKHQQFFSNPFYVGGDSYSGMIVPPLVQEIGKGNYQINLQGYILGNPITDTESEQNYQIPYAHGMALISDELYKSMERICKGNYVKVDSLNTKCYKLIKDYQKCIHKLNKYHILLPDCDITSPDCFLYRYTLITFWANNKSVREALQVNKGSIGKWVQCNYKNISYNYDIKSSVAYHMKNSIDGYRSLIYNGDHDMMVPFLATQAWIRSLNYSITDDWKPWMINDQIAGYTRSYSNKMTFATIKGSGHTAEYKPKETSIMFKRWISAQPL</sequence>
<protein>
    <recommendedName>
        <fullName>Serine carboxypeptidase-like 13</fullName>
    </recommendedName>
    <alternativeName>
        <fullName>Sinapoylglucose--sinapoylglucose O-sinapoyltransferase</fullName>
        <ecNumber>2.3.1.103</ecNumber>
    </alternativeName>
    <alternativeName>
        <fullName>Sinapoylglucose--sinapoylglucose acyltransferase</fullName>
    </alternativeName>
</protein>
<feature type="signal peptide" evidence="2">
    <location>
        <begin position="1"/>
        <end position="22"/>
    </location>
</feature>
<feature type="chain" id="PRO_0000274627" description="Serine carboxypeptidase-like 13">
    <location>
        <begin position="23"/>
        <end position="430"/>
    </location>
</feature>
<feature type="active site" evidence="1">
    <location>
        <position position="177"/>
    </location>
</feature>
<feature type="active site" evidence="1">
    <location>
        <position position="355"/>
    </location>
</feature>
<feature type="active site" evidence="1">
    <location>
        <position position="408"/>
    </location>
</feature>
<feature type="glycosylation site" description="N-linked (GlcNAc...) asparagine" evidence="2">
    <location>
        <position position="102"/>
    </location>
</feature>
<feature type="glycosylation site" description="N-linked (GlcNAc...) asparagine" evidence="2">
    <location>
        <position position="299"/>
    </location>
</feature>
<feature type="glycosylation site" description="N-linked (GlcNAc...) asparagine" evidence="2">
    <location>
        <position position="323"/>
    </location>
</feature>
<feature type="glycosylation site" description="N-linked (GlcNAc...) asparagine" evidence="2">
    <location>
        <position position="371"/>
    </location>
</feature>
<feature type="disulfide bond" evidence="1">
    <location>
        <begin position="81"/>
        <end position="319"/>
    </location>
</feature>
<feature type="disulfide bond" evidence="1">
    <location>
        <begin position="240"/>
        <end position="254"/>
    </location>
</feature>
<feature type="disulfide bond" evidence="1">
    <location>
        <begin position="278"/>
        <end position="285"/>
    </location>
</feature>
<feature type="splice variant" id="VSP_022847" description="In isoform 2." evidence="5">
    <original>GSGHTAE</original>
    <variation>ASLLVST</variation>
    <location>
        <begin position="405"/>
        <end position="411"/>
    </location>
</feature>
<feature type="splice variant" id="VSP_022848" description="In isoform 2." evidence="5">
    <location>
        <begin position="412"/>
        <end position="430"/>
    </location>
</feature>
<feature type="sequence conflict" description="In Ref. 1; AAN60354." evidence="6" ref="1">
    <original>I</original>
    <variation>F</variation>
    <location>
        <position position="15"/>
    </location>
</feature>
<feature type="sequence conflict" description="In Ref. 1; AAN60354." evidence="6" ref="1">
    <original>P</original>
    <variation>S</variation>
    <location>
        <position position="37"/>
    </location>
</feature>
<feature type="sequence conflict" description="In Ref. 1; AAN60354." evidence="6" ref="1">
    <original>T</original>
    <variation>A</variation>
    <location>
        <position position="112"/>
    </location>
</feature>
<feature type="sequence conflict" description="In Ref. 1; AAN60354." evidence="6" ref="1">
    <original>S</original>
    <variation>A</variation>
    <location>
        <position position="130"/>
    </location>
</feature>
<feature type="sequence conflict" description="In Ref. 1; AAN60354." evidence="6" ref="1">
    <original>I</original>
    <variation>T</variation>
    <location>
        <position position="143"/>
    </location>
</feature>
<feature type="sequence conflict" description="In Ref. 1; AAN60354." evidence="6" ref="1">
    <original>G</original>
    <variation>A</variation>
    <location>
        <position position="191"/>
    </location>
</feature>
<feature type="sequence conflict" description="In Ref. 1; AAN60354." evidence="6" ref="1">
    <original>K</original>
    <variation>N</variation>
    <location>
        <position position="246"/>
    </location>
</feature>
<feature type="sequence conflict" description="In Ref. 1; AAN60354." evidence="6" ref="1">
    <original>I</original>
    <variation>L</variation>
    <location>
        <position position="265"/>
    </location>
</feature>
<feature type="sequence conflict" description="In Ref. 1; AAN60354." evidence="6" ref="1">
    <original>I</original>
    <variation>M</variation>
    <location>
        <position position="293"/>
    </location>
</feature>
<feature type="sequence conflict" description="In Ref. 1; AAN60354." evidence="6" ref="1">
    <original>K</original>
    <variation>E</variation>
    <location>
        <position position="315"/>
    </location>
</feature>
<feature type="sequence conflict" description="In Ref. 1; AAN60354." evidence="6" ref="1">
    <original>K</original>
    <variation>R</variation>
    <location>
        <position position="379"/>
    </location>
</feature>
<dbReference type="EC" id="2.3.1.103"/>
<dbReference type="EMBL" id="AF083796">
    <property type="protein sequence ID" value="AAN60354.1"/>
    <property type="molecule type" value="mRNA"/>
</dbReference>
<dbReference type="EMBL" id="AC004401">
    <property type="protein sequence ID" value="AAC17815.1"/>
    <property type="molecule type" value="Genomic_DNA"/>
</dbReference>
<dbReference type="EMBL" id="AC004786">
    <property type="protein sequence ID" value="AAM15008.1"/>
    <property type="molecule type" value="Genomic_DNA"/>
</dbReference>
<dbReference type="EMBL" id="CP002685">
    <property type="protein sequence ID" value="AEC07385.1"/>
    <property type="molecule type" value="Genomic_DNA"/>
</dbReference>
<dbReference type="EMBL" id="CP002685">
    <property type="protein sequence ID" value="AEC07386.1"/>
    <property type="molecule type" value="Genomic_DNA"/>
</dbReference>
<dbReference type="EMBL" id="AF410326">
    <property type="protein sequence ID" value="AAK95312.1"/>
    <property type="status" value="ALT_FRAME"/>
    <property type="molecule type" value="mRNA"/>
</dbReference>
<dbReference type="EMBL" id="BT000529">
    <property type="protein sequence ID" value="AAN18098.1"/>
    <property type="status" value="ALT_INIT"/>
    <property type="molecule type" value="mRNA"/>
</dbReference>
<dbReference type="PIR" id="B84619">
    <property type="entry name" value="B84619"/>
</dbReference>
<dbReference type="RefSeq" id="NP_001031402.1">
    <molecule id="Q8H780-2"/>
    <property type="nucleotide sequence ID" value="NM_001036325.3"/>
</dbReference>
<dbReference type="RefSeq" id="NP_179881.3">
    <molecule id="Q8H780-1"/>
    <property type="nucleotide sequence ID" value="NM_127863.5"/>
</dbReference>
<dbReference type="SMR" id="Q8H780"/>
<dbReference type="FunCoup" id="Q8H780">
    <property type="interactions" value="628"/>
</dbReference>
<dbReference type="STRING" id="3702.Q8H780"/>
<dbReference type="ESTHER" id="arath-SCP13">
    <property type="family name" value="Carboxypeptidase_S10"/>
</dbReference>
<dbReference type="MEROPS" id="S10.004"/>
<dbReference type="GlyCosmos" id="Q8H780">
    <property type="glycosylation" value="4 sites, No reported glycans"/>
</dbReference>
<dbReference type="GlyGen" id="Q8H780">
    <property type="glycosylation" value="4 sites"/>
</dbReference>
<dbReference type="PaxDb" id="3702-AT2G22980.4"/>
<dbReference type="ProteomicsDB" id="232702">
    <molecule id="Q8H780-1"/>
</dbReference>
<dbReference type="EnsemblPlants" id="AT2G22980.1">
    <molecule id="Q8H780-1"/>
    <property type="protein sequence ID" value="AT2G22980.1"/>
    <property type="gene ID" value="AT2G22980"/>
</dbReference>
<dbReference type="EnsemblPlants" id="AT2G22980.2">
    <molecule id="Q8H780-2"/>
    <property type="protein sequence ID" value="AT2G22980.2"/>
    <property type="gene ID" value="AT2G22980"/>
</dbReference>
<dbReference type="GeneID" id="816829"/>
<dbReference type="Gramene" id="AT2G22980.1">
    <molecule id="Q8H780-1"/>
    <property type="protein sequence ID" value="AT2G22980.1"/>
    <property type="gene ID" value="AT2G22980"/>
</dbReference>
<dbReference type="Gramene" id="AT2G22980.2">
    <molecule id="Q8H780-2"/>
    <property type="protein sequence ID" value="AT2G22980.2"/>
    <property type="gene ID" value="AT2G22980"/>
</dbReference>
<dbReference type="KEGG" id="ath:AT2G22980"/>
<dbReference type="Araport" id="AT2G22980"/>
<dbReference type="TAIR" id="AT2G22980">
    <property type="gene designation" value="SCPL13"/>
</dbReference>
<dbReference type="eggNOG" id="KOG1282">
    <property type="taxonomic scope" value="Eukaryota"/>
</dbReference>
<dbReference type="HOGENOM" id="CLU_008523_0_1_1"/>
<dbReference type="InParanoid" id="Q8H780"/>
<dbReference type="OMA" id="LLPDCHK"/>
<dbReference type="PhylomeDB" id="Q8H780"/>
<dbReference type="BioCyc" id="ARA:AT2G22980-MONOMER"/>
<dbReference type="BioCyc" id="MetaCyc:AT2G22980-MONOMER"/>
<dbReference type="PRO" id="PR:Q8H780"/>
<dbReference type="Proteomes" id="UP000006548">
    <property type="component" value="Chromosome 2"/>
</dbReference>
<dbReference type="ExpressionAtlas" id="Q8H780">
    <property type="expression patterns" value="baseline and differential"/>
</dbReference>
<dbReference type="GO" id="GO:0005576">
    <property type="term" value="C:extracellular region"/>
    <property type="evidence" value="ECO:0007669"/>
    <property type="project" value="UniProtKB-SubCell"/>
</dbReference>
<dbReference type="GO" id="GO:0004185">
    <property type="term" value="F:serine-type carboxypeptidase activity"/>
    <property type="evidence" value="ECO:0007669"/>
    <property type="project" value="InterPro"/>
</dbReference>
<dbReference type="GO" id="GO:0047158">
    <property type="term" value="F:sinapoylglucose-sinapoylglucose O-sinapoyltransferase activity"/>
    <property type="evidence" value="ECO:0007669"/>
    <property type="project" value="UniProtKB-EC"/>
</dbReference>
<dbReference type="GO" id="GO:0006508">
    <property type="term" value="P:proteolysis"/>
    <property type="evidence" value="ECO:0007669"/>
    <property type="project" value="InterPro"/>
</dbReference>
<dbReference type="FunFam" id="3.40.50.1820:FF:000148">
    <property type="entry name" value="Serine carboxypeptidase-like 11"/>
    <property type="match status" value="1"/>
</dbReference>
<dbReference type="Gene3D" id="3.40.50.1820">
    <property type="entry name" value="alpha/beta hydrolase"/>
    <property type="match status" value="1"/>
</dbReference>
<dbReference type="InterPro" id="IPR029058">
    <property type="entry name" value="AB_hydrolase_fold"/>
</dbReference>
<dbReference type="InterPro" id="IPR001563">
    <property type="entry name" value="Peptidase_S10"/>
</dbReference>
<dbReference type="PANTHER" id="PTHR11802:SF361">
    <property type="entry name" value="SERINE CARBOXYPEPTIDASE-LIKE 11-RELATED"/>
    <property type="match status" value="1"/>
</dbReference>
<dbReference type="PANTHER" id="PTHR11802">
    <property type="entry name" value="SERINE PROTEASE FAMILY S10 SERINE CARBOXYPEPTIDASE"/>
    <property type="match status" value="1"/>
</dbReference>
<dbReference type="Pfam" id="PF00450">
    <property type="entry name" value="Peptidase_S10"/>
    <property type="match status" value="1"/>
</dbReference>
<dbReference type="PRINTS" id="PR00724">
    <property type="entry name" value="CRBOXYPTASEC"/>
</dbReference>
<dbReference type="SUPFAM" id="SSF53474">
    <property type="entry name" value="alpha/beta-Hydrolases"/>
    <property type="match status" value="1"/>
</dbReference>
<proteinExistence type="evidence at transcript level"/>